<dbReference type="EMBL" id="AE017308">
    <property type="protein sequence ID" value="AAT27725.1"/>
    <property type="molecule type" value="Genomic_DNA"/>
</dbReference>
<dbReference type="RefSeq" id="WP_011264759.1">
    <property type="nucleotide sequence ID" value="NC_006908.1"/>
</dbReference>
<dbReference type="SMR" id="Q6KI51"/>
<dbReference type="STRING" id="267748.MMOB2390"/>
<dbReference type="KEGG" id="mmo:MMOB2390"/>
<dbReference type="eggNOG" id="COG0185">
    <property type="taxonomic scope" value="Bacteria"/>
</dbReference>
<dbReference type="HOGENOM" id="CLU_144911_0_1_14"/>
<dbReference type="OrthoDB" id="9797833at2"/>
<dbReference type="Proteomes" id="UP000009072">
    <property type="component" value="Chromosome"/>
</dbReference>
<dbReference type="GO" id="GO:0005737">
    <property type="term" value="C:cytoplasm"/>
    <property type="evidence" value="ECO:0007669"/>
    <property type="project" value="UniProtKB-ARBA"/>
</dbReference>
<dbReference type="GO" id="GO:0015935">
    <property type="term" value="C:small ribosomal subunit"/>
    <property type="evidence" value="ECO:0007669"/>
    <property type="project" value="InterPro"/>
</dbReference>
<dbReference type="GO" id="GO:0019843">
    <property type="term" value="F:rRNA binding"/>
    <property type="evidence" value="ECO:0007669"/>
    <property type="project" value="UniProtKB-UniRule"/>
</dbReference>
<dbReference type="GO" id="GO:0003735">
    <property type="term" value="F:structural constituent of ribosome"/>
    <property type="evidence" value="ECO:0007669"/>
    <property type="project" value="InterPro"/>
</dbReference>
<dbReference type="GO" id="GO:0000028">
    <property type="term" value="P:ribosomal small subunit assembly"/>
    <property type="evidence" value="ECO:0007669"/>
    <property type="project" value="TreeGrafter"/>
</dbReference>
<dbReference type="GO" id="GO:0006412">
    <property type="term" value="P:translation"/>
    <property type="evidence" value="ECO:0007669"/>
    <property type="project" value="UniProtKB-UniRule"/>
</dbReference>
<dbReference type="FunFam" id="3.30.860.10:FF:000001">
    <property type="entry name" value="30S ribosomal protein S19"/>
    <property type="match status" value="1"/>
</dbReference>
<dbReference type="Gene3D" id="3.30.860.10">
    <property type="entry name" value="30s Ribosomal Protein S19, Chain A"/>
    <property type="match status" value="1"/>
</dbReference>
<dbReference type="HAMAP" id="MF_00531">
    <property type="entry name" value="Ribosomal_uS19"/>
    <property type="match status" value="1"/>
</dbReference>
<dbReference type="InterPro" id="IPR002222">
    <property type="entry name" value="Ribosomal_uS19"/>
</dbReference>
<dbReference type="InterPro" id="IPR005732">
    <property type="entry name" value="Ribosomal_uS19_bac-type"/>
</dbReference>
<dbReference type="InterPro" id="IPR020934">
    <property type="entry name" value="Ribosomal_uS19_CS"/>
</dbReference>
<dbReference type="InterPro" id="IPR023575">
    <property type="entry name" value="Ribosomal_uS19_SF"/>
</dbReference>
<dbReference type="NCBIfam" id="TIGR01050">
    <property type="entry name" value="rpsS_bact"/>
    <property type="match status" value="1"/>
</dbReference>
<dbReference type="PANTHER" id="PTHR11880">
    <property type="entry name" value="RIBOSOMAL PROTEIN S19P FAMILY MEMBER"/>
    <property type="match status" value="1"/>
</dbReference>
<dbReference type="PANTHER" id="PTHR11880:SF8">
    <property type="entry name" value="SMALL RIBOSOMAL SUBUNIT PROTEIN US19M"/>
    <property type="match status" value="1"/>
</dbReference>
<dbReference type="Pfam" id="PF00203">
    <property type="entry name" value="Ribosomal_S19"/>
    <property type="match status" value="1"/>
</dbReference>
<dbReference type="PIRSF" id="PIRSF002144">
    <property type="entry name" value="Ribosomal_S19"/>
    <property type="match status" value="1"/>
</dbReference>
<dbReference type="PRINTS" id="PR00975">
    <property type="entry name" value="RIBOSOMALS19"/>
</dbReference>
<dbReference type="SUPFAM" id="SSF54570">
    <property type="entry name" value="Ribosomal protein S19"/>
    <property type="match status" value="1"/>
</dbReference>
<dbReference type="PROSITE" id="PS00323">
    <property type="entry name" value="RIBOSOMAL_S19"/>
    <property type="match status" value="1"/>
</dbReference>
<organism>
    <name type="scientific">Mycoplasma mobile (strain ATCC 43663 / 163K / NCTC 11711)</name>
    <name type="common">Mesomycoplasma mobile</name>
    <dbReference type="NCBI Taxonomy" id="267748"/>
    <lineage>
        <taxon>Bacteria</taxon>
        <taxon>Bacillati</taxon>
        <taxon>Mycoplasmatota</taxon>
        <taxon>Mycoplasmoidales</taxon>
        <taxon>Metamycoplasmataceae</taxon>
        <taxon>Mesomycoplasma</taxon>
    </lineage>
</organism>
<gene>
    <name evidence="1" type="primary">rpsS</name>
    <name type="ordered locus">MMOB2390</name>
</gene>
<feature type="chain" id="PRO_0000129853" description="Small ribosomal subunit protein uS19">
    <location>
        <begin position="1"/>
        <end position="91"/>
    </location>
</feature>
<feature type="region of interest" description="Disordered" evidence="2">
    <location>
        <begin position="72"/>
        <end position="91"/>
    </location>
</feature>
<accession>Q6KI51</accession>
<protein>
    <recommendedName>
        <fullName evidence="1">Small ribosomal subunit protein uS19</fullName>
    </recommendedName>
    <alternativeName>
        <fullName evidence="3">30S ribosomal protein S19</fullName>
    </alternativeName>
</protein>
<keyword id="KW-1185">Reference proteome</keyword>
<keyword id="KW-0687">Ribonucleoprotein</keyword>
<keyword id="KW-0689">Ribosomal protein</keyword>
<keyword id="KW-0694">RNA-binding</keyword>
<keyword id="KW-0699">rRNA-binding</keyword>
<reference key="1">
    <citation type="journal article" date="2004" name="Genome Res.">
        <title>The complete genome and proteome of Mycoplasma mobile.</title>
        <authorList>
            <person name="Jaffe J.D."/>
            <person name="Stange-Thomann N."/>
            <person name="Smith C."/>
            <person name="DeCaprio D."/>
            <person name="Fisher S."/>
            <person name="Butler J."/>
            <person name="Calvo S."/>
            <person name="Elkins T."/>
            <person name="FitzGerald M.G."/>
            <person name="Hafez N."/>
            <person name="Kodira C.D."/>
            <person name="Major J."/>
            <person name="Wang S."/>
            <person name="Wilkinson J."/>
            <person name="Nicol R."/>
            <person name="Nusbaum C."/>
            <person name="Birren B."/>
            <person name="Berg H.C."/>
            <person name="Church G.M."/>
        </authorList>
    </citation>
    <scope>NUCLEOTIDE SEQUENCE [LARGE SCALE GENOMIC DNA]</scope>
    <source>
        <strain>ATCC 43663 / NCTC 11711 / 163 K</strain>
    </source>
</reference>
<name>RS19_MYCM1</name>
<evidence type="ECO:0000255" key="1">
    <source>
        <dbReference type="HAMAP-Rule" id="MF_00531"/>
    </source>
</evidence>
<evidence type="ECO:0000256" key="2">
    <source>
        <dbReference type="SAM" id="MobiDB-lite"/>
    </source>
</evidence>
<evidence type="ECO:0000305" key="3"/>
<sequence length="91" mass="10360">MARSAKKGFYVEASLMKKVVNAIESKSKKPIKTWSRRSTIFPEFVGFTFQVHNGRQFIDVYVTDDMVGHKLGEFSPTRTYTGHGSEKGKKK</sequence>
<comment type="function">
    <text evidence="1">Protein S19 forms a complex with S13 that binds strongly to the 16S ribosomal RNA.</text>
</comment>
<comment type="similarity">
    <text evidence="1">Belongs to the universal ribosomal protein uS19 family.</text>
</comment>
<proteinExistence type="inferred from homology"/>